<evidence type="ECO:0000255" key="1">
    <source>
        <dbReference type="HAMAP-Rule" id="MF_01874"/>
    </source>
</evidence>
<gene>
    <name evidence="1" type="primary">yeaL</name>
    <name type="ordered locus">ECBD_1856</name>
    <name type="ordered locus">ECD_01758</name>
    <name type="ordered locus">B21_01746</name>
</gene>
<organism>
    <name type="scientific">Escherichia coli (strain B / BL21-DE3)</name>
    <dbReference type="NCBI Taxonomy" id="469008"/>
    <lineage>
        <taxon>Bacteria</taxon>
        <taxon>Pseudomonadati</taxon>
        <taxon>Pseudomonadota</taxon>
        <taxon>Gammaproteobacteria</taxon>
        <taxon>Enterobacterales</taxon>
        <taxon>Enterobacteriaceae</taxon>
        <taxon>Escherichia</taxon>
    </lineage>
</organism>
<dbReference type="EMBL" id="AM946981">
    <property type="protein sequence ID" value="CAQ32263.1"/>
    <property type="molecule type" value="Genomic_DNA"/>
</dbReference>
<dbReference type="EMBL" id="CP001665">
    <property type="protein sequence ID" value="ACT28904.1"/>
    <property type="molecule type" value="Genomic_DNA"/>
</dbReference>
<dbReference type="EMBL" id="CP001509">
    <property type="protein sequence ID" value="ACT43612.1"/>
    <property type="molecule type" value="Genomic_DNA"/>
</dbReference>
<dbReference type="RefSeq" id="WP_000460707.1">
    <property type="nucleotide sequence ID" value="NZ_JADXDS010000003.1"/>
</dbReference>
<dbReference type="KEGG" id="ebd:ECBD_1856"/>
<dbReference type="KEGG" id="ebe:B21_01746"/>
<dbReference type="KEGG" id="ebl:ECD_01758"/>
<dbReference type="PATRIC" id="fig|469008.15.peg.1780"/>
<dbReference type="eggNOG" id="COG2707">
    <property type="taxonomic scope" value="Bacteria"/>
</dbReference>
<dbReference type="HOGENOM" id="CLU_125889_0_0_6"/>
<dbReference type="GO" id="GO:0005886">
    <property type="term" value="C:plasma membrane"/>
    <property type="evidence" value="ECO:0007669"/>
    <property type="project" value="UniProtKB-SubCell"/>
</dbReference>
<dbReference type="HAMAP" id="MF_01874">
    <property type="entry name" value="UPF0756"/>
    <property type="match status" value="1"/>
</dbReference>
<dbReference type="InterPro" id="IPR007382">
    <property type="entry name" value="UPF0756_TM"/>
</dbReference>
<dbReference type="PANTHER" id="PTHR38452">
    <property type="entry name" value="UPF0756 MEMBRANE PROTEIN YEAL"/>
    <property type="match status" value="1"/>
</dbReference>
<dbReference type="PANTHER" id="PTHR38452:SF1">
    <property type="entry name" value="UPF0756 MEMBRANE PROTEIN YEAL"/>
    <property type="match status" value="1"/>
</dbReference>
<dbReference type="Pfam" id="PF04284">
    <property type="entry name" value="DUF441"/>
    <property type="match status" value="1"/>
</dbReference>
<keyword id="KW-1003">Cell membrane</keyword>
<keyword id="KW-0472">Membrane</keyword>
<keyword id="KW-0812">Transmembrane</keyword>
<keyword id="KW-1133">Transmembrane helix</keyword>
<feature type="chain" id="PRO_0000388855" description="UPF0756 membrane protein YeaL">
    <location>
        <begin position="1"/>
        <end position="148"/>
    </location>
</feature>
<feature type="transmembrane region" description="Helical" evidence="1">
    <location>
        <begin position="14"/>
        <end position="34"/>
    </location>
</feature>
<feature type="transmembrane region" description="Helical" evidence="1">
    <location>
        <begin position="51"/>
        <end position="71"/>
    </location>
</feature>
<feature type="transmembrane region" description="Helical" evidence="1">
    <location>
        <begin position="86"/>
        <end position="106"/>
    </location>
</feature>
<feature type="transmembrane region" description="Helical" evidence="1">
    <location>
        <begin position="121"/>
        <end position="141"/>
    </location>
</feature>
<proteinExistence type="inferred from homology"/>
<comment type="subcellular location">
    <subcellularLocation>
        <location evidence="1">Cell membrane</location>
        <topology evidence="1">Multi-pass membrane protein</topology>
    </subcellularLocation>
</comment>
<comment type="similarity">
    <text evidence="1">Belongs to the UPF0756 family.</text>
</comment>
<name>YEAL_ECOBD</name>
<protein>
    <recommendedName>
        <fullName evidence="1">UPF0756 membrane protein YeaL</fullName>
    </recommendedName>
</protein>
<reference key="1">
    <citation type="submission" date="2009-06" db="EMBL/GenBank/DDBJ databases">
        <title>Sequencing and gene expression analysis of Escherichia coli BL21.</title>
        <authorList>
            <person name="Leparc G."/>
            <person name="Striedner G."/>
            <person name="Bayer K."/>
            <person name="Kreil D."/>
            <person name="Krempl P.M."/>
        </authorList>
    </citation>
    <scope>NUCLEOTIDE SEQUENCE [LARGE SCALE GENOMIC DNA]</scope>
    <source>
        <strain>B / BL21-DE3</strain>
    </source>
</reference>
<reference key="2">
    <citation type="submission" date="2009-07" db="EMBL/GenBank/DDBJ databases">
        <title>Complete sequence of Escherichia coli BL21(DE3).</title>
        <authorList>
            <person name="Lucas S."/>
            <person name="Copeland A."/>
            <person name="Lapidus A."/>
            <person name="Glavina del Rio T."/>
            <person name="Dalin E."/>
            <person name="Tice H."/>
            <person name="Bruce D."/>
            <person name="Goodwin L."/>
            <person name="Pitluck S."/>
            <person name="LaButti K.M."/>
            <person name="Clum A."/>
            <person name="Larimer F."/>
            <person name="Land M."/>
            <person name="Hauser L."/>
            <person name="Kyrpides N."/>
            <person name="Anderson I."/>
            <person name="Sorek R."/>
            <person name="Rubin E."/>
        </authorList>
    </citation>
    <scope>NUCLEOTIDE SEQUENCE [LARGE SCALE GENOMIC DNA]</scope>
    <source>
        <strain>B / BL21-DE3</strain>
    </source>
</reference>
<reference key="3">
    <citation type="journal article" date="2009" name="J. Mol. Biol.">
        <title>Genome sequences of Escherichia coli B strains REL606 and BL21(DE3).</title>
        <authorList>
            <person name="Jeong H."/>
            <person name="Barbe V."/>
            <person name="Lee C.H."/>
            <person name="Vallenet D."/>
            <person name="Yu D.S."/>
            <person name="Choi S.H."/>
            <person name="Couloux A."/>
            <person name="Lee S.W."/>
            <person name="Yoon S.H."/>
            <person name="Cattolico L."/>
            <person name="Hur C.G."/>
            <person name="Park H.S."/>
            <person name="Segurens B."/>
            <person name="Kim S.C."/>
            <person name="Oh T.K."/>
            <person name="Lenski R.E."/>
            <person name="Studier F.W."/>
            <person name="Daegelen P."/>
            <person name="Kim J.F."/>
        </authorList>
    </citation>
    <scope>NUCLEOTIDE SEQUENCE [LARGE SCALE GENOMIC DNA]</scope>
    <source>
        <strain>B / BL21-DE3</strain>
    </source>
</reference>
<sequence length="148" mass="15256">MFDVTLLILLGLAALGFISHNTTVAVSILVLIIVRVTPLSTFFPWIEKQGLSIGIIILTIGVMAPIASGTLPPSTLIHSFLNWKSLVAIAVGVIVSWLGGRGVTLMGSQPQLVAGLLVGTVLGVALFRGVPVGPLIAAGLVSLIVGKQ</sequence>
<accession>C5W4W1</accession>
<accession>C6EC42</accession>